<protein>
    <recommendedName>
        <fullName evidence="1">Putative ion-transport protein YfeO</fullName>
    </recommendedName>
</protein>
<reference key="1">
    <citation type="journal article" date="2009" name="PLoS Genet.">
        <title>Organised genome dynamics in the Escherichia coli species results in highly diverse adaptive paths.</title>
        <authorList>
            <person name="Touchon M."/>
            <person name="Hoede C."/>
            <person name="Tenaillon O."/>
            <person name="Barbe V."/>
            <person name="Baeriswyl S."/>
            <person name="Bidet P."/>
            <person name="Bingen E."/>
            <person name="Bonacorsi S."/>
            <person name="Bouchier C."/>
            <person name="Bouvet O."/>
            <person name="Calteau A."/>
            <person name="Chiapello H."/>
            <person name="Clermont O."/>
            <person name="Cruveiller S."/>
            <person name="Danchin A."/>
            <person name="Diard M."/>
            <person name="Dossat C."/>
            <person name="Karoui M.E."/>
            <person name="Frapy E."/>
            <person name="Garry L."/>
            <person name="Ghigo J.M."/>
            <person name="Gilles A.M."/>
            <person name="Johnson J."/>
            <person name="Le Bouguenec C."/>
            <person name="Lescat M."/>
            <person name="Mangenot S."/>
            <person name="Martinez-Jehanne V."/>
            <person name="Matic I."/>
            <person name="Nassif X."/>
            <person name="Oztas S."/>
            <person name="Petit M.A."/>
            <person name="Pichon C."/>
            <person name="Rouy Z."/>
            <person name="Ruf C.S."/>
            <person name="Schneider D."/>
            <person name="Tourret J."/>
            <person name="Vacherie B."/>
            <person name="Vallenet D."/>
            <person name="Medigue C."/>
            <person name="Rocha E.P.C."/>
            <person name="Denamur E."/>
        </authorList>
    </citation>
    <scope>NUCLEOTIDE SEQUENCE [LARGE SCALE GENOMIC DNA]</scope>
    <source>
        <strain>IAI1</strain>
    </source>
</reference>
<keyword id="KW-1003">Cell membrane</keyword>
<keyword id="KW-0407">Ion channel</keyword>
<keyword id="KW-0406">Ion transport</keyword>
<keyword id="KW-0472">Membrane</keyword>
<keyword id="KW-0812">Transmembrane</keyword>
<keyword id="KW-1133">Transmembrane helix</keyword>
<keyword id="KW-0813">Transport</keyword>
<dbReference type="EMBL" id="CU928160">
    <property type="protein sequence ID" value="CAQ99297.1"/>
    <property type="molecule type" value="Genomic_DNA"/>
</dbReference>
<dbReference type="RefSeq" id="WP_000903106.1">
    <property type="nucleotide sequence ID" value="NC_011741.1"/>
</dbReference>
<dbReference type="SMR" id="B7M6Q9"/>
<dbReference type="KEGG" id="ecr:ECIAI1_2455"/>
<dbReference type="HOGENOM" id="CLU_053130_0_0_6"/>
<dbReference type="GO" id="GO:0005886">
    <property type="term" value="C:plasma membrane"/>
    <property type="evidence" value="ECO:0007669"/>
    <property type="project" value="UniProtKB-SubCell"/>
</dbReference>
<dbReference type="GO" id="GO:0015108">
    <property type="term" value="F:chloride transmembrane transporter activity"/>
    <property type="evidence" value="ECO:0007669"/>
    <property type="project" value="InterPro"/>
</dbReference>
<dbReference type="GO" id="GO:0005216">
    <property type="term" value="F:monoatomic ion channel activity"/>
    <property type="evidence" value="ECO:0007669"/>
    <property type="project" value="UniProtKB-UniRule"/>
</dbReference>
<dbReference type="CDD" id="cd00400">
    <property type="entry name" value="Voltage_gated_ClC"/>
    <property type="match status" value="1"/>
</dbReference>
<dbReference type="FunFam" id="1.10.3080.10:FF:000007">
    <property type="entry name" value="Putative ion-transport protein YfeO"/>
    <property type="match status" value="1"/>
</dbReference>
<dbReference type="Gene3D" id="1.10.3080.10">
    <property type="entry name" value="Clc chloride channel"/>
    <property type="match status" value="1"/>
</dbReference>
<dbReference type="HAMAP" id="MF_01115">
    <property type="entry name" value="CLC_YfeO"/>
    <property type="match status" value="1"/>
</dbReference>
<dbReference type="InterPro" id="IPR022969">
    <property type="entry name" value="Chloride_channel_YfeO"/>
</dbReference>
<dbReference type="InterPro" id="IPR014743">
    <property type="entry name" value="Cl-channel_core"/>
</dbReference>
<dbReference type="InterPro" id="IPR001807">
    <property type="entry name" value="ClC"/>
</dbReference>
<dbReference type="InterPro" id="IPR050368">
    <property type="entry name" value="ClC-type_chloride_channel"/>
</dbReference>
<dbReference type="NCBIfam" id="NF002971">
    <property type="entry name" value="PRK03655.1"/>
    <property type="match status" value="1"/>
</dbReference>
<dbReference type="PANTHER" id="PTHR43427">
    <property type="entry name" value="CHLORIDE CHANNEL PROTEIN CLC-E"/>
    <property type="match status" value="1"/>
</dbReference>
<dbReference type="PANTHER" id="PTHR43427:SF9">
    <property type="entry name" value="ION-TRANSPORT PROTEIN YFEO-RELATED"/>
    <property type="match status" value="1"/>
</dbReference>
<dbReference type="Pfam" id="PF00654">
    <property type="entry name" value="Voltage_CLC"/>
    <property type="match status" value="1"/>
</dbReference>
<dbReference type="PRINTS" id="PR00762">
    <property type="entry name" value="CLCHANNEL"/>
</dbReference>
<dbReference type="SUPFAM" id="SSF81340">
    <property type="entry name" value="Clc chloride channel"/>
    <property type="match status" value="1"/>
</dbReference>
<sequence length="418" mass="43523">MLHPRARTMLLLSLPAVAIGIASSLILIVVMKIASALQNLLWQRLPGTLGIAQDSPLWIIGVLTLTGIAVGLVIRFSQGHAGPDPACEPLIGAPVPPSALPGLIVALILGLAGGVSLGPEHPIMTVNIALAVAIGARLLPRVNRMEWTILASAGTIGALFGTPVAAALIFSQTLNGSSEVPLWDRLFAPLMAAAAGALTTGLFFHPHFSLPIAHYGQMEMTDILSGAIVAAIAIAAGMVAVWCLPRLHAMMNQMKNPVLVLGIGGFILGILGVIGGPVSLFKGLDEMQQMVANQAFSTSDYFLLAVIKLAALVVAAASGFRGGRIFPAVFVGVALGLMLHEHVPAVPAAITVSCAILGIVLVVTRDGWLSLFMAAVVVPNTTLLPLLCIVMLPAWLLLAGKPMMMVNRPKQQPPHDNV</sequence>
<gene>
    <name evidence="1" type="primary">yfeO</name>
    <name type="ordered locus">ECIAI1_2455</name>
</gene>
<organism>
    <name type="scientific">Escherichia coli O8 (strain IAI1)</name>
    <dbReference type="NCBI Taxonomy" id="585034"/>
    <lineage>
        <taxon>Bacteria</taxon>
        <taxon>Pseudomonadati</taxon>
        <taxon>Pseudomonadota</taxon>
        <taxon>Gammaproteobacteria</taxon>
        <taxon>Enterobacterales</taxon>
        <taxon>Enterobacteriaceae</taxon>
        <taxon>Escherichia</taxon>
    </lineage>
</organism>
<comment type="subcellular location">
    <subcellularLocation>
        <location evidence="1">Cell membrane</location>
        <topology evidence="1">Multi-pass membrane protein</topology>
    </subcellularLocation>
</comment>
<comment type="similarity">
    <text evidence="1">Belongs to the chloride channel (TC 2.A.49) family.</text>
</comment>
<evidence type="ECO:0000255" key="1">
    <source>
        <dbReference type="HAMAP-Rule" id="MF_01115"/>
    </source>
</evidence>
<accession>B7M6Q9</accession>
<name>YFEO_ECO8A</name>
<feature type="chain" id="PRO_1000137210" description="Putative ion-transport protein YfeO">
    <location>
        <begin position="1"/>
        <end position="418"/>
    </location>
</feature>
<feature type="transmembrane region" description="Helical" evidence="1">
    <location>
        <begin position="10"/>
        <end position="30"/>
    </location>
</feature>
<feature type="transmembrane region" description="Helical" evidence="1">
    <location>
        <begin position="54"/>
        <end position="74"/>
    </location>
</feature>
<feature type="transmembrane region" description="Helical" evidence="1">
    <location>
        <begin position="99"/>
        <end position="119"/>
    </location>
</feature>
<feature type="transmembrane region" description="Helical" evidence="1">
    <location>
        <begin position="120"/>
        <end position="140"/>
    </location>
</feature>
<feature type="transmembrane region" description="Helical" evidence="1">
    <location>
        <begin position="149"/>
        <end position="169"/>
    </location>
</feature>
<feature type="transmembrane region" description="Helical" evidence="1">
    <location>
        <begin position="186"/>
        <end position="206"/>
    </location>
</feature>
<feature type="transmembrane region" description="Helical" evidence="1">
    <location>
        <begin position="223"/>
        <end position="243"/>
    </location>
</feature>
<feature type="transmembrane region" description="Helical" evidence="1">
    <location>
        <begin position="258"/>
        <end position="278"/>
    </location>
</feature>
<feature type="transmembrane region" description="Helical" evidence="1">
    <location>
        <begin position="300"/>
        <end position="320"/>
    </location>
</feature>
<feature type="transmembrane region" description="Helical" evidence="1">
    <location>
        <begin position="322"/>
        <end position="342"/>
    </location>
</feature>
<feature type="transmembrane region" description="Helical" evidence="1">
    <location>
        <begin position="343"/>
        <end position="363"/>
    </location>
</feature>
<feature type="transmembrane region" description="Helical" evidence="1">
    <location>
        <begin position="371"/>
        <end position="391"/>
    </location>
</feature>
<proteinExistence type="inferred from homology"/>